<organism>
    <name type="scientific">Cavia porcellus</name>
    <name type="common">Guinea pig</name>
    <dbReference type="NCBI Taxonomy" id="10141"/>
    <lineage>
        <taxon>Eukaryota</taxon>
        <taxon>Metazoa</taxon>
        <taxon>Chordata</taxon>
        <taxon>Craniata</taxon>
        <taxon>Vertebrata</taxon>
        <taxon>Euteleostomi</taxon>
        <taxon>Mammalia</taxon>
        <taxon>Eutheria</taxon>
        <taxon>Euarchontoglires</taxon>
        <taxon>Glires</taxon>
        <taxon>Rodentia</taxon>
        <taxon>Hystricomorpha</taxon>
        <taxon>Caviidae</taxon>
        <taxon>Cavia</taxon>
    </lineage>
</organism>
<feature type="chain" id="PRO_0000458412" description="Sodium-independent sulfate anion transporter">
    <location>
        <begin position="1"/>
        <end position="605"/>
    </location>
</feature>
<feature type="topological domain" description="Extracellular" evidence="6">
    <location>
        <begin position="1"/>
        <end position="50"/>
    </location>
</feature>
<feature type="transmembrane region" description="Helical" evidence="3">
    <location>
        <begin position="51"/>
        <end position="71"/>
    </location>
</feature>
<feature type="topological domain" description="Cytoplasmic" evidence="6">
    <location>
        <position position="72"/>
    </location>
</feature>
<feature type="transmembrane region" description="Helical" evidence="3">
    <location>
        <begin position="73"/>
        <end position="93"/>
    </location>
</feature>
<feature type="topological domain" description="Extracellular" evidence="6">
    <location>
        <begin position="94"/>
        <end position="98"/>
    </location>
</feature>
<feature type="transmembrane region" description="Helical" evidence="3">
    <location>
        <begin position="99"/>
        <end position="119"/>
    </location>
</feature>
<feature type="topological domain" description="Cytoplasmic" evidence="6">
    <location>
        <begin position="120"/>
        <end position="122"/>
    </location>
</feature>
<feature type="transmembrane region" description="Helical" evidence="3">
    <location>
        <begin position="123"/>
        <end position="143"/>
    </location>
</feature>
<feature type="topological domain" description="Extracellular" evidence="6">
    <location>
        <begin position="144"/>
        <end position="146"/>
    </location>
</feature>
<feature type="transmembrane region" description="Helical" evidence="3">
    <location>
        <begin position="147"/>
        <end position="167"/>
    </location>
</feature>
<feature type="topological domain" description="Cytoplasmic" evidence="6">
    <location>
        <begin position="168"/>
        <end position="196"/>
    </location>
</feature>
<feature type="transmembrane region" description="Helical" evidence="3">
    <location>
        <begin position="197"/>
        <end position="217"/>
    </location>
</feature>
<feature type="topological domain" description="Extracellular" evidence="6">
    <location>
        <begin position="218"/>
        <end position="249"/>
    </location>
</feature>
<feature type="transmembrane region" description="Helical" evidence="3">
    <location>
        <begin position="250"/>
        <end position="270"/>
    </location>
</feature>
<feature type="topological domain" description="Cytoplasmic" evidence="6">
    <location>
        <begin position="271"/>
        <end position="303"/>
    </location>
</feature>
<feature type="transmembrane region" description="Helical" evidence="3">
    <location>
        <begin position="304"/>
        <end position="324"/>
    </location>
</feature>
<feature type="topological domain" description="Extracellular" evidence="6">
    <location>
        <begin position="325"/>
        <end position="340"/>
    </location>
</feature>
<feature type="transmembrane region" description="Helical" evidence="3">
    <location>
        <begin position="341"/>
        <end position="361"/>
    </location>
</feature>
<feature type="topological domain" description="Cytoplasmic" evidence="6">
    <location>
        <begin position="362"/>
        <end position="373"/>
    </location>
</feature>
<feature type="transmembrane region" description="Helical" evidence="3">
    <location>
        <begin position="374"/>
        <end position="394"/>
    </location>
</feature>
<feature type="topological domain" description="Extracellular" evidence="6">
    <location>
        <begin position="395"/>
        <end position="397"/>
    </location>
</feature>
<feature type="transmembrane region" description="Helical" evidence="3">
    <location>
        <begin position="398"/>
        <end position="418"/>
    </location>
</feature>
<feature type="topological domain" description="Cytoplasmic" evidence="6">
    <location>
        <begin position="419"/>
        <end position="447"/>
    </location>
</feature>
<feature type="transmembrane region" description="Helical" evidence="3">
    <location>
        <begin position="448"/>
        <end position="468"/>
    </location>
</feature>
<feature type="topological domain" description="Extracellular" evidence="6">
    <location>
        <begin position="469"/>
        <end position="605"/>
    </location>
</feature>
<feature type="domain" description="STAS" evidence="4">
    <location>
        <begin position="479"/>
        <end position="582"/>
    </location>
</feature>
<accession>G3C7W6</accession>
<evidence type="ECO:0000250" key="1">
    <source>
        <dbReference type="UniProtKB" id="Q80ZD3"/>
    </source>
</evidence>
<evidence type="ECO:0000250" key="2">
    <source>
        <dbReference type="UniProtKB" id="Q86WA9"/>
    </source>
</evidence>
<evidence type="ECO:0000255" key="3"/>
<evidence type="ECO:0000255" key="4">
    <source>
        <dbReference type="PROSITE-ProRule" id="PRU00198"/>
    </source>
</evidence>
<evidence type="ECO:0000269" key="5">
    <source>
    </source>
</evidence>
<evidence type="ECO:0000305" key="6"/>
<reference key="1">
    <citation type="journal article" date="2011" name="Am. J. Physiol.">
        <title>SLC26 anion exchangers of guinea pig pancreatic duct: molecular cloning and functional characterization.</title>
        <authorList>
            <person name="Stewart A.K."/>
            <person name="Shmukler B.E."/>
            <person name="Vandorpe D.H."/>
            <person name="Reimold F."/>
            <person name="Heneghan J.F."/>
            <person name="Nakakuki M."/>
            <person name="Akhavein A."/>
            <person name="Ko S."/>
            <person name="Ishiguro H."/>
            <person name="Alper S.L."/>
        </authorList>
    </citation>
    <scope>NUCLEOTIDE SEQUENCE [MRNA]</scope>
    <scope>FUNCTION</scope>
    <scope>TRANSPORTER ACTIVITY</scope>
    <source>
        <tissue>Kidney</tissue>
    </source>
</reference>
<reference key="2">
    <citation type="journal article" date="2011" name="Nature">
        <title>A high-resolution map of human evolutionary constraint using 29 mammals.</title>
        <authorList>
            <person name="Lindblad-Toh K."/>
            <person name="Garber M."/>
            <person name="Zuk O."/>
            <person name="Lin M.F."/>
            <person name="Parker B.J."/>
            <person name="Washietl S."/>
            <person name="Kheradpour P."/>
            <person name="Ernst J."/>
            <person name="Jordan G."/>
            <person name="Mauceli E."/>
            <person name="Ward L.D."/>
            <person name="Lowe C.B."/>
            <person name="Holloway A.K."/>
            <person name="Clamp M."/>
            <person name="Gnerre S."/>
            <person name="Alfoldi J."/>
            <person name="Beal K."/>
            <person name="Chang J."/>
            <person name="Clawson H."/>
            <person name="Cuff J."/>
            <person name="Di Palma F."/>
            <person name="Fitzgerald S."/>
            <person name="Flicek P."/>
            <person name="Guttman M."/>
            <person name="Hubisz M.J."/>
            <person name="Jaffe D.B."/>
            <person name="Jungreis I."/>
            <person name="Kent W.J."/>
            <person name="Kostka D."/>
            <person name="Lara M."/>
            <person name="Martins A.L."/>
            <person name="Massingham T."/>
            <person name="Moltke I."/>
            <person name="Raney B.J."/>
            <person name="Rasmussen M.D."/>
            <person name="Robinson J."/>
            <person name="Stark A."/>
            <person name="Vilella A.J."/>
            <person name="Wen J."/>
            <person name="Xie X."/>
            <person name="Zody M.C."/>
            <person name="Baldwin J."/>
            <person name="Bloom T."/>
            <person name="Chin C.W."/>
            <person name="Heiman D."/>
            <person name="Nicol R."/>
            <person name="Nusbaum C."/>
            <person name="Young S."/>
            <person name="Wilkinson J."/>
            <person name="Worley K.C."/>
            <person name="Kovar C.L."/>
            <person name="Muzny D.M."/>
            <person name="Gibbs R.A."/>
            <person name="Cree A."/>
            <person name="Dihn H.H."/>
            <person name="Fowler G."/>
            <person name="Jhangiani S."/>
            <person name="Joshi V."/>
            <person name="Lee S."/>
            <person name="Lewis L.R."/>
            <person name="Nazareth L.V."/>
            <person name="Okwuonu G."/>
            <person name="Santibanez J."/>
            <person name="Warren W.C."/>
            <person name="Mardis E.R."/>
            <person name="Weinstock G.M."/>
            <person name="Wilson R.K."/>
            <person name="Delehaunty K."/>
            <person name="Dooling D."/>
            <person name="Fronik C."/>
            <person name="Fulton L."/>
            <person name="Fulton B."/>
            <person name="Graves T."/>
            <person name="Minx P."/>
            <person name="Sodergren E."/>
            <person name="Birney E."/>
            <person name="Margulies E.H."/>
            <person name="Herrero J."/>
            <person name="Green E.D."/>
            <person name="Haussler D."/>
            <person name="Siepel A."/>
            <person name="Goldman N."/>
            <person name="Pollard K.S."/>
            <person name="Pedersen J.S."/>
            <person name="Lander E.S."/>
            <person name="Kellis M."/>
        </authorList>
    </citation>
    <scope>NUCLEOTIDE SEQUENCE [LARGE SCALE GENOMIC DNA]</scope>
    <source>
        <strain>2N</strain>
    </source>
</reference>
<comment type="function">
    <text evidence="1 2 5">Sodium-independent anion exchanger mediating bicarbonate, chloride, sulfate and oxalate transport (PubMed:21593449). Exhibits sodium-independent sulfate anion transporter activity that may cooperate with SLC26A2 to mediate DIDS-sensitive sulfate uptake into high endothelial venules endothelial cells (HEVEC) (By similarity). In the kidney, mediates chloride-bicarbonate exchange, facilitating V-ATPase-mediated acid secretion (By similarity). May function as a chloride channel, playing an important role in moderating chloride homeostasis and neuronal activity in the cerebellum (By similarity).</text>
</comment>
<comment type="catalytic activity">
    <reaction evidence="5">
        <text>hydrogencarbonate(in) + chloride(out) = hydrogencarbonate(out) + chloride(in)</text>
        <dbReference type="Rhea" id="RHEA:72363"/>
        <dbReference type="ChEBI" id="CHEBI:17544"/>
        <dbReference type="ChEBI" id="CHEBI:17996"/>
    </reaction>
</comment>
<comment type="catalytic activity">
    <reaction evidence="5">
        <text>sulfate(in) + H(+)(in) = sulfate(out) + H(+)(out)</text>
        <dbReference type="Rhea" id="RHEA:28574"/>
        <dbReference type="ChEBI" id="CHEBI:15378"/>
        <dbReference type="ChEBI" id="CHEBI:16189"/>
    </reaction>
</comment>
<comment type="catalytic activity">
    <reaction evidence="5">
        <text>oxalate(in) + chloride(out) = oxalate(out) + chloride(in)</text>
        <dbReference type="Rhea" id="RHEA:72263"/>
        <dbReference type="ChEBI" id="CHEBI:17996"/>
        <dbReference type="ChEBI" id="CHEBI:30623"/>
    </reaction>
</comment>
<comment type="subcellular location">
    <subcellularLocation>
        <location evidence="2">Cell membrane</location>
        <topology evidence="3">Multi-pass membrane protein</topology>
    </subcellularLocation>
    <subcellularLocation>
        <location evidence="2">Lysosome membrane</location>
        <topology evidence="3">Multi-pass membrane protein</topology>
    </subcellularLocation>
    <subcellularLocation>
        <location evidence="1">Apical cell membrane</location>
        <topology evidence="3">Multi-pass membrane protein</topology>
    </subcellularLocation>
    <subcellularLocation>
        <location evidence="1">Basolateral cell membrane</location>
        <topology evidence="3">Multi-pass membrane protein</topology>
    </subcellularLocation>
</comment>
<comment type="similarity">
    <text evidence="3">Belongs to the SLC26A/SulP transporter (TC 2.A.53) family.</text>
</comment>
<proteinExistence type="evidence at transcript level"/>
<keyword id="KW-0039">Anion exchange</keyword>
<keyword id="KW-1003">Cell membrane</keyword>
<keyword id="KW-0406">Ion transport</keyword>
<keyword id="KW-0458">Lysosome</keyword>
<keyword id="KW-0472">Membrane</keyword>
<keyword id="KW-1185">Reference proteome</keyword>
<keyword id="KW-0812">Transmembrane</keyword>
<keyword id="KW-1133">Transmembrane helix</keyword>
<keyword id="KW-0813">Transport</keyword>
<dbReference type="EMBL" id="AAKN02047339">
    <property type="status" value="NOT_ANNOTATED_CDS"/>
    <property type="molecule type" value="Genomic_DNA"/>
</dbReference>
<dbReference type="EMBL" id="GU722139">
    <property type="protein sequence ID" value="ADW95142.1"/>
    <property type="molecule type" value="mRNA"/>
</dbReference>
<dbReference type="RefSeq" id="NP_001233593.1">
    <property type="nucleotide sequence ID" value="NM_001246664.1"/>
</dbReference>
<dbReference type="RefSeq" id="XP_013002463.1">
    <property type="nucleotide sequence ID" value="XM_013147009.1"/>
</dbReference>
<dbReference type="SMR" id="G3C7W6"/>
<dbReference type="FunCoup" id="G3C7W6">
    <property type="interactions" value="439"/>
</dbReference>
<dbReference type="STRING" id="10141.ENSCPOP00000004690"/>
<dbReference type="TCDB" id="2.A.53.1.9">
    <property type="family name" value="the sulfate permease (sulp) family"/>
</dbReference>
<dbReference type="Ensembl" id="ENSCPOT00000005272.3">
    <property type="protein sequence ID" value="ENSCPOP00000004690.2"/>
    <property type="gene ID" value="ENSCPOG00000005217.4"/>
</dbReference>
<dbReference type="GeneID" id="100689284"/>
<dbReference type="KEGG" id="cpoc:100689284"/>
<dbReference type="CTD" id="284129"/>
<dbReference type="VEuPathDB" id="HostDB:ENSCPOG00000005217"/>
<dbReference type="eggNOG" id="KOG0236">
    <property type="taxonomic scope" value="Eukaryota"/>
</dbReference>
<dbReference type="GeneTree" id="ENSGT01120000271864"/>
<dbReference type="HOGENOM" id="CLU_003182_12_2_1"/>
<dbReference type="InParanoid" id="G3C7W6"/>
<dbReference type="OMA" id="IPETAGF"/>
<dbReference type="OrthoDB" id="288203at2759"/>
<dbReference type="TreeFam" id="TF323537"/>
<dbReference type="Proteomes" id="UP000005447">
    <property type="component" value="Unassembled WGS sequence"/>
</dbReference>
<dbReference type="Bgee" id="ENSCPOG00000005217">
    <property type="expression patterns" value="Expressed in adult mammalian kidney and 12 other cell types or tissues"/>
</dbReference>
<dbReference type="GO" id="GO:0016324">
    <property type="term" value="C:apical plasma membrane"/>
    <property type="evidence" value="ECO:0000250"/>
    <property type="project" value="UniProtKB"/>
</dbReference>
<dbReference type="GO" id="GO:0016323">
    <property type="term" value="C:basolateral plasma membrane"/>
    <property type="evidence" value="ECO:0000250"/>
    <property type="project" value="UniProtKB"/>
</dbReference>
<dbReference type="GO" id="GO:0005783">
    <property type="term" value="C:endoplasmic reticulum"/>
    <property type="evidence" value="ECO:0007669"/>
    <property type="project" value="Ensembl"/>
</dbReference>
<dbReference type="GO" id="GO:0005794">
    <property type="term" value="C:Golgi apparatus"/>
    <property type="evidence" value="ECO:0007669"/>
    <property type="project" value="Ensembl"/>
</dbReference>
<dbReference type="GO" id="GO:0005765">
    <property type="term" value="C:lysosomal membrane"/>
    <property type="evidence" value="ECO:0007669"/>
    <property type="project" value="UniProtKB-SubCell"/>
</dbReference>
<dbReference type="GO" id="GO:0005654">
    <property type="term" value="C:nucleoplasm"/>
    <property type="evidence" value="ECO:0007669"/>
    <property type="project" value="Ensembl"/>
</dbReference>
<dbReference type="GO" id="GO:0005886">
    <property type="term" value="C:plasma membrane"/>
    <property type="evidence" value="ECO:0000250"/>
    <property type="project" value="UniProtKB"/>
</dbReference>
<dbReference type="GO" id="GO:0005254">
    <property type="term" value="F:chloride channel activity"/>
    <property type="evidence" value="ECO:0000250"/>
    <property type="project" value="UniProtKB"/>
</dbReference>
<dbReference type="GO" id="GO:0140900">
    <property type="term" value="F:chloride:bicarbonate antiporter activity"/>
    <property type="evidence" value="ECO:0000314"/>
    <property type="project" value="UniProtKB"/>
</dbReference>
<dbReference type="GO" id="GO:0008271">
    <property type="term" value="F:secondary active sulfate transmembrane transporter activity"/>
    <property type="evidence" value="ECO:0007669"/>
    <property type="project" value="InterPro"/>
</dbReference>
<dbReference type="GO" id="GO:0019532">
    <property type="term" value="P:oxalate transport"/>
    <property type="evidence" value="ECO:0000314"/>
    <property type="project" value="UniProtKB"/>
</dbReference>
<dbReference type="GO" id="GO:1902358">
    <property type="term" value="P:sulfate transmembrane transport"/>
    <property type="evidence" value="ECO:0000314"/>
    <property type="project" value="UniProtKB"/>
</dbReference>
<dbReference type="CDD" id="cd07042">
    <property type="entry name" value="STAS_SulP_like_sulfate_transporter"/>
    <property type="match status" value="1"/>
</dbReference>
<dbReference type="FunFam" id="3.30.750.24:FF:000013">
    <property type="entry name" value="Solute carrier family 26 member 11"/>
    <property type="match status" value="1"/>
</dbReference>
<dbReference type="Gene3D" id="3.30.750.24">
    <property type="entry name" value="STAS domain"/>
    <property type="match status" value="1"/>
</dbReference>
<dbReference type="InterPro" id="IPR018045">
    <property type="entry name" value="S04_transporter_CS"/>
</dbReference>
<dbReference type="InterPro" id="IPR011547">
    <property type="entry name" value="SLC26A/SulP_dom"/>
</dbReference>
<dbReference type="InterPro" id="IPR001902">
    <property type="entry name" value="SLC26A/SulP_fam"/>
</dbReference>
<dbReference type="InterPro" id="IPR002645">
    <property type="entry name" value="STAS_dom"/>
</dbReference>
<dbReference type="InterPro" id="IPR036513">
    <property type="entry name" value="STAS_dom_sf"/>
</dbReference>
<dbReference type="PANTHER" id="PTHR11814">
    <property type="entry name" value="SULFATE TRANSPORTER"/>
    <property type="match status" value="1"/>
</dbReference>
<dbReference type="Pfam" id="PF01740">
    <property type="entry name" value="STAS"/>
    <property type="match status" value="1"/>
</dbReference>
<dbReference type="Pfam" id="PF00916">
    <property type="entry name" value="Sulfate_transp"/>
    <property type="match status" value="1"/>
</dbReference>
<dbReference type="SUPFAM" id="SSF52091">
    <property type="entry name" value="SpoIIaa-like"/>
    <property type="match status" value="1"/>
</dbReference>
<dbReference type="PROSITE" id="PS51257">
    <property type="entry name" value="PROKAR_LIPOPROTEIN"/>
    <property type="match status" value="1"/>
</dbReference>
<dbReference type="PROSITE" id="PS01130">
    <property type="entry name" value="SLC26A"/>
    <property type="match status" value="1"/>
</dbReference>
<dbReference type="PROSITE" id="PS50801">
    <property type="entry name" value="STAS"/>
    <property type="match status" value="1"/>
</dbReference>
<sequence length="605" mass="65355">MPSSLKGLGQAWLSSSSMALSACCSVSAWQKRLPVLAWLPRYSLQWLKMDFIAGLSVGLTVIPQALAYAEVAGLPPQYGLYSAFTGCFVYVFLGTSRDVTLGPTAIMSLLVSFYTFHEPAYAVLLTFLSGCIQLAMGLLHLGFLLDFISCPVIKGFTSAAAIIIGFGQIKNLLGLHNIPRQFFLQVYHTFLSVGETRLGDAILGLVCMVLLLVLKLMRDRIPPVHPEMPLCVRLSCGLVWTTATARNALVVSFAALVAYSFEVTGYQPFILTGEIAKGLPPVRVPPFSVTMANGTVSFTRMVQDLGAGLAVVPLIGLLESIAVAKAFASQNDYHVDANQELLAIGLTNMLGSFVSSYPITGSFGRTAVNAQSGVCTPAGGLVTGALVLLSLDYLTSLFYYIPKAALAAVIIMAVVPLFDTKIFGMLWRVKRLDLLPLCATFLLCFWEVQYGILAGTLVSTLFLLHFVARPKTQVSEGPVLILQLASGLHFPAIETLRDIVLSRALEVTSPRPAVLECSHVCSIDYTVVLGLAGLLEDFRKQGVSLVFSGLQAPVLHTLLAADLKGFQNFPTLEKAEQYVRQELGMEPYNVCEDSVPEHKVTLLTA</sequence>
<name>S2611_CAVPO</name>
<gene>
    <name type="primary">Slc26a11</name>
</gene>
<protein>
    <recommendedName>
        <fullName>Sodium-independent sulfate anion transporter</fullName>
    </recommendedName>
    <alternativeName>
        <fullName>Solute carrier family 26 member 11</fullName>
    </alternativeName>
</protein>